<reference key="1">
    <citation type="journal article" date="1997" name="Nature">
        <title>Molecular basis of symbiosis between Rhizobium and legumes.</title>
        <authorList>
            <person name="Freiberg C.A."/>
            <person name="Fellay R."/>
            <person name="Bairoch A."/>
            <person name="Broughton W.J."/>
            <person name="Rosenthal A."/>
            <person name="Perret X."/>
        </authorList>
    </citation>
    <scope>NUCLEOTIDE SEQUENCE [LARGE SCALE GENOMIC DNA]</scope>
    <source>
        <strain>NBRC 101917 / NGR234</strain>
    </source>
</reference>
<reference key="2">
    <citation type="journal article" date="2009" name="Appl. Environ. Microbiol.">
        <title>Rhizobium sp. strain NGR234 possesses a remarkable number of secretion systems.</title>
        <authorList>
            <person name="Schmeisser C."/>
            <person name="Liesegang H."/>
            <person name="Krysciak D."/>
            <person name="Bakkou N."/>
            <person name="Le Quere A."/>
            <person name="Wollherr A."/>
            <person name="Heinemeyer I."/>
            <person name="Morgenstern B."/>
            <person name="Pommerening-Roeser A."/>
            <person name="Flores M."/>
            <person name="Palacios R."/>
            <person name="Brenner S."/>
            <person name="Gottschalk G."/>
            <person name="Schmitz R.A."/>
            <person name="Broughton W.J."/>
            <person name="Perret X."/>
            <person name="Strittmatter A.W."/>
            <person name="Streit W.R."/>
        </authorList>
    </citation>
    <scope>NUCLEOTIDE SEQUENCE [LARGE SCALE GENOMIC DNA]</scope>
    <source>
        <strain>NBRC 101917 / NGR234</strain>
    </source>
</reference>
<gene>
    <name type="ordered locus">NGR_a03570</name>
    <name type="ORF">y4gG</name>
</gene>
<accession>P55463</accession>
<feature type="chain" id="PRO_0000207988" description="dTDP-4-dehydrorhamnose reductase">
    <location>
        <begin position="1"/>
        <end position="296"/>
    </location>
</feature>
<feature type="active site" description="Proton donor/acceptor" evidence="1">
    <location>
        <position position="124"/>
    </location>
</feature>
<feature type="binding site" evidence="1">
    <location>
        <begin position="10"/>
        <end position="12"/>
    </location>
    <ligand>
        <name>NADH</name>
        <dbReference type="ChEBI" id="CHEBI:57945"/>
    </ligand>
</feature>
<feature type="binding site" evidence="1">
    <location>
        <begin position="11"/>
        <end position="12"/>
    </location>
    <ligand>
        <name>NADPH</name>
        <dbReference type="ChEBI" id="CHEBI:57783"/>
    </ligand>
</feature>
<feature type="binding site" evidence="1">
    <location>
        <begin position="35"/>
        <end position="36"/>
    </location>
    <ligand>
        <name>NADH</name>
        <dbReference type="ChEBI" id="CHEBI:57945"/>
    </ligand>
</feature>
<feature type="binding site" evidence="1">
    <location>
        <begin position="35"/>
        <end position="36"/>
    </location>
    <ligand>
        <name>NADPH</name>
        <dbReference type="ChEBI" id="CHEBI:57783"/>
    </ligand>
</feature>
<feature type="binding site" evidence="1">
    <location>
        <begin position="59"/>
        <end position="61"/>
    </location>
    <ligand>
        <name>NADH</name>
        <dbReference type="ChEBI" id="CHEBI:57945"/>
    </ligand>
</feature>
<feature type="binding site" evidence="1">
    <location>
        <begin position="59"/>
        <end position="61"/>
    </location>
    <ligand>
        <name>NADPH</name>
        <dbReference type="ChEBI" id="CHEBI:57783"/>
    </ligand>
</feature>
<feature type="binding site" evidence="1">
    <location>
        <begin position="100"/>
        <end position="101"/>
    </location>
    <ligand>
        <name>dTDP-beta-L-rhamnose</name>
        <dbReference type="ChEBI" id="CHEBI:57510"/>
    </ligand>
</feature>
<feature type="binding site" evidence="1">
    <location>
        <position position="124"/>
    </location>
    <ligand>
        <name>NADH</name>
        <dbReference type="ChEBI" id="CHEBI:57945"/>
    </ligand>
</feature>
<feature type="binding site" evidence="1">
    <location>
        <position position="124"/>
    </location>
    <ligand>
        <name>NADPH</name>
        <dbReference type="ChEBI" id="CHEBI:57783"/>
    </ligand>
</feature>
<feature type="binding site" evidence="1">
    <location>
        <position position="128"/>
    </location>
    <ligand>
        <name>NADH</name>
        <dbReference type="ChEBI" id="CHEBI:57945"/>
    </ligand>
</feature>
<feature type="binding site" evidence="1">
    <location>
        <position position="128"/>
    </location>
    <ligand>
        <name>NADPH</name>
        <dbReference type="ChEBI" id="CHEBI:57783"/>
    </ligand>
</feature>
<feature type="binding site" evidence="1">
    <location>
        <position position="149"/>
    </location>
    <ligand>
        <name>dTDP-beta-L-rhamnose</name>
        <dbReference type="ChEBI" id="CHEBI:57510"/>
    </ligand>
</feature>
<feature type="site" description="Could provide a fine-tuning to achieve optimal pKa matching between active site and substrate" evidence="1">
    <location>
        <position position="100"/>
    </location>
</feature>
<dbReference type="EC" id="1.1.1.133" evidence="1"/>
<dbReference type="EMBL" id="U00090">
    <property type="protein sequence ID" value="AAB91681.1"/>
    <property type="molecule type" value="Genomic_DNA"/>
</dbReference>
<dbReference type="RefSeq" id="NP_443869.1">
    <property type="nucleotide sequence ID" value="NC_000914.2"/>
</dbReference>
<dbReference type="RefSeq" id="WP_010875371.1">
    <property type="nucleotide sequence ID" value="NC_000914.2"/>
</dbReference>
<dbReference type="SMR" id="P55463"/>
<dbReference type="KEGG" id="rhi:NGR_a03570"/>
<dbReference type="PATRIC" id="fig|394.7.peg.365"/>
<dbReference type="eggNOG" id="COG1091">
    <property type="taxonomic scope" value="Bacteria"/>
</dbReference>
<dbReference type="HOGENOM" id="CLU_045518_1_2_5"/>
<dbReference type="OrthoDB" id="9803892at2"/>
<dbReference type="UniPathway" id="UPA00124"/>
<dbReference type="Proteomes" id="UP000001054">
    <property type="component" value="Plasmid pNGR234a"/>
</dbReference>
<dbReference type="GO" id="GO:0008831">
    <property type="term" value="F:dTDP-4-dehydrorhamnose reductase activity"/>
    <property type="evidence" value="ECO:0000250"/>
    <property type="project" value="UniProtKB"/>
</dbReference>
<dbReference type="GO" id="GO:0046872">
    <property type="term" value="F:metal ion binding"/>
    <property type="evidence" value="ECO:0007669"/>
    <property type="project" value="UniProtKB-KW"/>
</dbReference>
<dbReference type="GO" id="GO:0019305">
    <property type="term" value="P:dTDP-rhamnose biosynthetic process"/>
    <property type="evidence" value="ECO:0007669"/>
    <property type="project" value="UniProtKB-UniPathway"/>
</dbReference>
<dbReference type="GO" id="GO:0000271">
    <property type="term" value="P:polysaccharide biosynthetic process"/>
    <property type="evidence" value="ECO:0000250"/>
    <property type="project" value="UniProtKB"/>
</dbReference>
<dbReference type="CDD" id="cd05254">
    <property type="entry name" value="dTDP_HR_like_SDR_e"/>
    <property type="match status" value="1"/>
</dbReference>
<dbReference type="Gene3D" id="3.40.50.720">
    <property type="entry name" value="NAD(P)-binding Rossmann-like Domain"/>
    <property type="match status" value="1"/>
</dbReference>
<dbReference type="Gene3D" id="3.90.25.10">
    <property type="entry name" value="UDP-galactose 4-epimerase, domain 1"/>
    <property type="match status" value="1"/>
</dbReference>
<dbReference type="InterPro" id="IPR005913">
    <property type="entry name" value="dTDP_dehydrorham_reduct"/>
</dbReference>
<dbReference type="InterPro" id="IPR036291">
    <property type="entry name" value="NAD(P)-bd_dom_sf"/>
</dbReference>
<dbReference type="InterPro" id="IPR029903">
    <property type="entry name" value="RmlD-like-bd"/>
</dbReference>
<dbReference type="NCBIfam" id="TIGR01214">
    <property type="entry name" value="rmlD"/>
    <property type="match status" value="1"/>
</dbReference>
<dbReference type="PANTHER" id="PTHR10491">
    <property type="entry name" value="DTDP-4-DEHYDRORHAMNOSE REDUCTASE"/>
    <property type="match status" value="1"/>
</dbReference>
<dbReference type="PANTHER" id="PTHR10491:SF4">
    <property type="entry name" value="METHIONINE ADENOSYLTRANSFERASE 2 SUBUNIT BETA"/>
    <property type="match status" value="1"/>
</dbReference>
<dbReference type="Pfam" id="PF04321">
    <property type="entry name" value="RmlD_sub_bind"/>
    <property type="match status" value="1"/>
</dbReference>
<dbReference type="SUPFAM" id="SSF51735">
    <property type="entry name" value="NAD(P)-binding Rossmann-fold domains"/>
    <property type="match status" value="1"/>
</dbReference>
<name>RMLD_SINFN</name>
<geneLocation type="plasmid">
    <name>sym pNGR234a</name>
</geneLocation>
<sequence>MRLAVTGKNGQIALALKAQARPDVEILTLGRPNFDLACRSTVASSIRDAAPDIIVSLAAYTAVDKAESEPYEAFAVNRDGVQALAEAAAGLGVPVIHLSTDYVFDGAKPVPYCEEDRTGPISVYGRSKLEGEFAVASANPNHTILRTSWVYSRYGQNFVKKMLRLADTNDELNVVADQLGCPTSADDISVAVMTIARRMLSSSSADLRGIFHLSGSGEASWAAFAKYVFSVYDEITGRQIKVHDISAAEYPTPARRPANSRLHCDKLERTFGIRLPNWEESTRRLVWALLLEGKDA</sequence>
<protein>
    <recommendedName>
        <fullName evidence="1">dTDP-4-dehydrorhamnose reductase</fullName>
        <ecNumber evidence="1">1.1.1.133</ecNumber>
    </recommendedName>
    <alternativeName>
        <fullName evidence="1">dTDP-4-keto-L-rhamnose reductase</fullName>
    </alternativeName>
    <alternativeName>
        <fullName evidence="1">dTDP-6-deoxy-L-lyxo-4-hexulose reductase</fullName>
    </alternativeName>
    <alternativeName>
        <fullName evidence="1">dTDP-6-deoxy-L-mannose dehydrogenase</fullName>
    </alternativeName>
    <alternativeName>
        <fullName evidence="1">dTDP-L-rhamnose synthase</fullName>
    </alternativeName>
</protein>
<keyword id="KW-0119">Carbohydrate metabolism</keyword>
<keyword id="KW-0460">Magnesium</keyword>
<keyword id="KW-0479">Metal-binding</keyword>
<keyword id="KW-0520">NAD</keyword>
<keyword id="KW-0521">NADP</keyword>
<keyword id="KW-0560">Oxidoreductase</keyword>
<keyword id="KW-0614">Plasmid</keyword>
<keyword id="KW-1185">Reference proteome</keyword>
<proteinExistence type="inferred from homology"/>
<organism>
    <name type="scientific">Sinorhizobium fredii (strain NBRC 101917 / NGR234)</name>
    <dbReference type="NCBI Taxonomy" id="394"/>
    <lineage>
        <taxon>Bacteria</taxon>
        <taxon>Pseudomonadati</taxon>
        <taxon>Pseudomonadota</taxon>
        <taxon>Alphaproteobacteria</taxon>
        <taxon>Hyphomicrobiales</taxon>
        <taxon>Rhizobiaceae</taxon>
        <taxon>Sinorhizobium/Ensifer group</taxon>
        <taxon>Sinorhizobium</taxon>
    </lineage>
</organism>
<comment type="function">
    <text evidence="1">Involved in the biosynthesis of the dTDP-L-rhamnose which is an important component of lipopolysaccharide (LPS). Catalyzes the reduction of dTDP-6-deoxy-L-lyxo-4-hexulose to yield dTDP-L-rhamnose. RmlD uses NADH and NADPH nearly equally well.</text>
</comment>
<comment type="catalytic activity">
    <reaction evidence="1">
        <text>dTDP-beta-L-rhamnose + NADP(+) = dTDP-4-dehydro-beta-L-rhamnose + NADPH + H(+)</text>
        <dbReference type="Rhea" id="RHEA:21796"/>
        <dbReference type="ChEBI" id="CHEBI:15378"/>
        <dbReference type="ChEBI" id="CHEBI:57510"/>
        <dbReference type="ChEBI" id="CHEBI:57783"/>
        <dbReference type="ChEBI" id="CHEBI:58349"/>
        <dbReference type="ChEBI" id="CHEBI:62830"/>
        <dbReference type="EC" id="1.1.1.133"/>
    </reaction>
</comment>
<comment type="cofactor">
    <cofactor evidence="1">
        <name>Mg(2+)</name>
        <dbReference type="ChEBI" id="CHEBI:18420"/>
    </cofactor>
    <text evidence="1">Binds 1 Mg(2+) ion per monomer.</text>
</comment>
<comment type="pathway">
    <text evidence="2">Carbohydrate biosynthesis; dTDP-L-rhamnose biosynthesis.</text>
</comment>
<comment type="subunit">
    <text evidence="1">Homodimer.</text>
</comment>
<comment type="similarity">
    <text evidence="3">Belongs to the dTDP-4-dehydrorhamnose reductase family.</text>
</comment>
<evidence type="ECO:0000250" key="1">
    <source>
        <dbReference type="UniProtKB" id="P26392"/>
    </source>
</evidence>
<evidence type="ECO:0000250" key="2">
    <source>
        <dbReference type="UniProtKB" id="P37760"/>
    </source>
</evidence>
<evidence type="ECO:0000305" key="3"/>